<name>MYDGF_BOVIN</name>
<accession>P62248</accession>
<accession>Q3T039</accession>
<reference key="1">
    <citation type="submission" date="2004-03" db="EMBL/GenBank/DDBJ databases">
        <title>Extended sequence analysis of the bovine genes represented by the pBTCL3-11 clones.</title>
        <authorList>
            <person name="Bonsdorff T."/>
            <person name="Gautier M."/>
            <person name="Olsaker I."/>
        </authorList>
    </citation>
    <scope>NUCLEOTIDE SEQUENCE [MRNA]</scope>
</reference>
<reference key="2">
    <citation type="submission" date="2005-08" db="EMBL/GenBank/DDBJ databases">
        <authorList>
            <consortium name="NIH - Mammalian Gene Collection (MGC) project"/>
        </authorList>
    </citation>
    <scope>NUCLEOTIDE SEQUENCE [LARGE SCALE MRNA]</scope>
    <source>
        <strain>Crossbred X Angus</strain>
        <tissue>Ileum</tissue>
    </source>
</reference>
<sequence length="174" mass="19030">MAAPSGRRNGSGGANLWVSLLLAAAALRPVETVSEPTTVAFDVRPGGVVHSFSQNVGPGDKYTCVFTYASQGGTNEKWQMSLGTSEDHQHFTCTIWRPQGKSYLYFTQFKAEVRGAEIEYGMAYSKAAFEKESDVPLKNEEFEVTKTAVFHRPGAFKAELSKLVIVAKATRSEL</sequence>
<feature type="signal peptide" evidence="1">
    <location>
        <begin position="1"/>
        <end position="32"/>
    </location>
</feature>
<feature type="chain" id="PRO_0000021007" description="Myeloid-derived growth factor">
    <location>
        <begin position="33"/>
        <end position="174"/>
    </location>
</feature>
<dbReference type="EMBL" id="AY581200">
    <property type="protein sequence ID" value="AAS93436.1"/>
    <property type="molecule type" value="mRNA"/>
</dbReference>
<dbReference type="EMBL" id="BC102581">
    <property type="protein sequence ID" value="AAI02582.1"/>
    <property type="molecule type" value="mRNA"/>
</dbReference>
<dbReference type="RefSeq" id="NP_001001164.1">
    <property type="nucleotide sequence ID" value="NM_001001164.1"/>
</dbReference>
<dbReference type="SMR" id="P62248"/>
<dbReference type="FunCoup" id="P62248">
    <property type="interactions" value="1273"/>
</dbReference>
<dbReference type="STRING" id="9913.ENSBTAP00000024823"/>
<dbReference type="PaxDb" id="9913-ENSBTAP00000024823"/>
<dbReference type="Ensembl" id="ENSBTAT00000024823.4">
    <property type="protein sequence ID" value="ENSBTAP00000024823.3"/>
    <property type="gene ID" value="ENSBTAG00000018655.5"/>
</dbReference>
<dbReference type="GeneID" id="407769"/>
<dbReference type="KEGG" id="bta:407769"/>
<dbReference type="CTD" id="56005"/>
<dbReference type="VEuPathDB" id="HostDB:ENSBTAG00000018655"/>
<dbReference type="VGNC" id="VGNC:31790">
    <property type="gene designation" value="MYDGF"/>
</dbReference>
<dbReference type="eggNOG" id="ENOG502RZK9">
    <property type="taxonomic scope" value="Eukaryota"/>
</dbReference>
<dbReference type="GeneTree" id="ENSGT00390000000777"/>
<dbReference type="HOGENOM" id="CLU_132160_0_0_1"/>
<dbReference type="InParanoid" id="P62248"/>
<dbReference type="OMA" id="CIFTYAS"/>
<dbReference type="OrthoDB" id="10061830at2759"/>
<dbReference type="TreeFam" id="TF332795"/>
<dbReference type="Proteomes" id="UP000009136">
    <property type="component" value="Chromosome 7"/>
</dbReference>
<dbReference type="Bgee" id="ENSBTAG00000018655">
    <property type="expression patterns" value="Expressed in granulosa cell and 109 other cell types or tissues"/>
</dbReference>
<dbReference type="GO" id="GO:0005783">
    <property type="term" value="C:endoplasmic reticulum"/>
    <property type="evidence" value="ECO:0000250"/>
    <property type="project" value="UniProtKB"/>
</dbReference>
<dbReference type="GO" id="GO:0005793">
    <property type="term" value="C:endoplasmic reticulum-Golgi intermediate compartment"/>
    <property type="evidence" value="ECO:0007669"/>
    <property type="project" value="UniProtKB-SubCell"/>
</dbReference>
<dbReference type="GO" id="GO:0005576">
    <property type="term" value="C:extracellular region"/>
    <property type="evidence" value="ECO:0000250"/>
    <property type="project" value="UniProtKB"/>
</dbReference>
<dbReference type="GO" id="GO:0005615">
    <property type="term" value="C:extracellular space"/>
    <property type="evidence" value="ECO:0000250"/>
    <property type="project" value="UniProtKB"/>
</dbReference>
<dbReference type="GO" id="GO:0005794">
    <property type="term" value="C:Golgi apparatus"/>
    <property type="evidence" value="ECO:0000250"/>
    <property type="project" value="UniProtKB"/>
</dbReference>
<dbReference type="GO" id="GO:0001525">
    <property type="term" value="P:angiogenesis"/>
    <property type="evidence" value="ECO:0007669"/>
    <property type="project" value="UniProtKB-KW"/>
</dbReference>
<dbReference type="GO" id="GO:0006915">
    <property type="term" value="P:apoptotic process"/>
    <property type="evidence" value="ECO:0007669"/>
    <property type="project" value="UniProtKB-KW"/>
</dbReference>
<dbReference type="GO" id="GO:0043066">
    <property type="term" value="P:negative regulation of apoptotic process"/>
    <property type="evidence" value="ECO:0000250"/>
    <property type="project" value="UniProtKB"/>
</dbReference>
<dbReference type="GO" id="GO:0045766">
    <property type="term" value="P:positive regulation of angiogenesis"/>
    <property type="evidence" value="ECO:0000250"/>
    <property type="project" value="UniProtKB"/>
</dbReference>
<dbReference type="GO" id="GO:0001938">
    <property type="term" value="P:positive regulation of endothelial cell proliferation"/>
    <property type="evidence" value="ECO:0000250"/>
    <property type="project" value="UniProtKB"/>
</dbReference>
<dbReference type="GO" id="GO:0043410">
    <property type="term" value="P:positive regulation of MAPK cascade"/>
    <property type="evidence" value="ECO:0000250"/>
    <property type="project" value="UniProtKB"/>
</dbReference>
<dbReference type="GO" id="GO:0051897">
    <property type="term" value="P:positive regulation of phosphatidylinositol 3-kinase/protein kinase B signal transduction"/>
    <property type="evidence" value="ECO:0000250"/>
    <property type="project" value="UniProtKB"/>
</dbReference>
<dbReference type="GO" id="GO:0001934">
    <property type="term" value="P:positive regulation of protein phosphorylation"/>
    <property type="evidence" value="ECO:0000250"/>
    <property type="project" value="UniProtKB"/>
</dbReference>
<dbReference type="GO" id="GO:0045944">
    <property type="term" value="P:positive regulation of transcription by RNA polymerase II"/>
    <property type="evidence" value="ECO:0000250"/>
    <property type="project" value="UniProtKB"/>
</dbReference>
<dbReference type="InterPro" id="IPR018887">
    <property type="entry name" value="MYDGF"/>
</dbReference>
<dbReference type="PANTHER" id="PTHR31230:SF1">
    <property type="entry name" value="MYELOID-DERIVED GROWTH FACTOR"/>
    <property type="match status" value="1"/>
</dbReference>
<dbReference type="PANTHER" id="PTHR31230">
    <property type="entry name" value="MYELOID-DERIVED GROWTH FACTOR MYDGF"/>
    <property type="match status" value="1"/>
</dbReference>
<dbReference type="Pfam" id="PF10572">
    <property type="entry name" value="UPF0556"/>
    <property type="match status" value="1"/>
</dbReference>
<keyword id="KW-0037">Angiogenesis</keyword>
<keyword id="KW-0053">Apoptosis</keyword>
<keyword id="KW-0256">Endoplasmic reticulum</keyword>
<keyword id="KW-0333">Golgi apparatus</keyword>
<keyword id="KW-1185">Reference proteome</keyword>
<keyword id="KW-0964">Secreted</keyword>
<keyword id="KW-0732">Signal</keyword>
<organism>
    <name type="scientific">Bos taurus</name>
    <name type="common">Bovine</name>
    <dbReference type="NCBI Taxonomy" id="9913"/>
    <lineage>
        <taxon>Eukaryota</taxon>
        <taxon>Metazoa</taxon>
        <taxon>Chordata</taxon>
        <taxon>Craniata</taxon>
        <taxon>Vertebrata</taxon>
        <taxon>Euteleostomi</taxon>
        <taxon>Mammalia</taxon>
        <taxon>Eutheria</taxon>
        <taxon>Laurasiatheria</taxon>
        <taxon>Artiodactyla</taxon>
        <taxon>Ruminantia</taxon>
        <taxon>Pecora</taxon>
        <taxon>Bovidae</taxon>
        <taxon>Bovinae</taxon>
        <taxon>Bos</taxon>
    </lineage>
</organism>
<proteinExistence type="evidence at transcript level"/>
<comment type="function">
    <text evidence="2">Bone marrow-derived monocyte and paracrine-acting protein that promotes cardiac myocyte survival and adaptive angiogenesis for cardiac protection and/or repair after myocardial infarction (MI). Stimulates endothelial cell proliferation through a MAPK1/3-, STAT3- and CCND1-mediated signaling pathway. Inhibits cardiac myocyte apoptosis in a PI3K/AKT-dependent signaling pathway.</text>
</comment>
<comment type="subcellular location">
    <subcellularLocation>
        <location evidence="1">Secreted</location>
    </subcellularLocation>
    <subcellularLocation>
        <location evidence="1">Endoplasmic reticulum-Golgi intermediate compartment</location>
    </subcellularLocation>
    <subcellularLocation>
        <location evidence="1">Endoplasmic reticulum</location>
    </subcellularLocation>
    <subcellularLocation>
        <location evidence="1">Golgi apparatus</location>
    </subcellularLocation>
    <text evidence="1">The C-terminal RTEL motif may provide retention in the endoplasmic reticulum.</text>
</comment>
<comment type="similarity">
    <text evidence="3">Belongs to the MYDGF family.</text>
</comment>
<comment type="caution">
    <text evidence="1">Human MYDGF has been reported to be secreted into blood plasma and localized to the endoplasmic reticulum-Golgi intermediate compartment. However, another report shows resident localization to the endoplasmic reticulum and Golgi apparatus and secretion when the two most C-terminal residues of the RTEL motif are abolished.</text>
</comment>
<gene>
    <name evidence="1" type="primary">MYDGF</name>
</gene>
<protein>
    <recommendedName>
        <fullName evidence="1">Myeloid-derived growth factor</fullName>
        <shortName evidence="1">MYDGF</shortName>
    </recommendedName>
</protein>
<evidence type="ECO:0000250" key="1">
    <source>
        <dbReference type="UniProtKB" id="Q969H8"/>
    </source>
</evidence>
<evidence type="ECO:0000250" key="2">
    <source>
        <dbReference type="UniProtKB" id="Q9CPT4"/>
    </source>
</evidence>
<evidence type="ECO:0000305" key="3"/>